<feature type="chain" id="PRO_0000124873" description="Prefoldin subunit beta">
    <location>
        <begin position="1"/>
        <end position="124"/>
    </location>
</feature>
<reference key="1">
    <citation type="journal article" date="2000" name="Proc. Natl. Acad. Sci. U.S.A.">
        <title>Archaeal adaptation to higher temperatures revealed by genomic sequence of Thermoplasma volcanium.</title>
        <authorList>
            <person name="Kawashima T."/>
            <person name="Amano N."/>
            <person name="Koike H."/>
            <person name="Makino S."/>
            <person name="Higuchi S."/>
            <person name="Kawashima-Ohya Y."/>
            <person name="Watanabe K."/>
            <person name="Yamazaki M."/>
            <person name="Kanehori K."/>
            <person name="Kawamoto T."/>
            <person name="Nunoshiba T."/>
            <person name="Yamamoto Y."/>
            <person name="Aramaki H."/>
            <person name="Makino K."/>
            <person name="Suzuki M."/>
        </authorList>
    </citation>
    <scope>NUCLEOTIDE SEQUENCE [LARGE SCALE GENOMIC DNA]</scope>
    <source>
        <strain>ATCC 51530 / DSM 4299 / JCM 9571 / NBRC 15438 / GSS1</strain>
    </source>
</reference>
<name>PFDB_THEVO</name>
<sequence length="124" mass="14642">MVEPNISSYLQNQLKQAQELEENIEKIATQRYQLDLSLKEIEKTLQELNKIDDKTPVYRSIGSILYKVDDKKKLIDELEEQLELTKIRINTLDKQQKSLEEKYKELQAAIRERYNQDNKKGAVS</sequence>
<dbReference type="EMBL" id="BA000011">
    <property type="protein sequence ID" value="BAB60379.1"/>
    <property type="molecule type" value="Genomic_DNA"/>
</dbReference>
<dbReference type="RefSeq" id="WP_010917471.1">
    <property type="nucleotide sequence ID" value="NC_002689.2"/>
</dbReference>
<dbReference type="SMR" id="Q979C4"/>
<dbReference type="STRING" id="273116.gene:9382042"/>
<dbReference type="PaxDb" id="273116-14325475"/>
<dbReference type="GeneID" id="1441353"/>
<dbReference type="KEGG" id="tvo:TVG1278162"/>
<dbReference type="eggNOG" id="arCOG01342">
    <property type="taxonomic scope" value="Archaea"/>
</dbReference>
<dbReference type="HOGENOM" id="CLU_131909_0_0_2"/>
<dbReference type="OrthoDB" id="56001at2157"/>
<dbReference type="PhylomeDB" id="Q979C4"/>
<dbReference type="Proteomes" id="UP000001017">
    <property type="component" value="Chromosome"/>
</dbReference>
<dbReference type="GO" id="GO:0005737">
    <property type="term" value="C:cytoplasm"/>
    <property type="evidence" value="ECO:0007669"/>
    <property type="project" value="UniProtKB-SubCell"/>
</dbReference>
<dbReference type="GO" id="GO:0016272">
    <property type="term" value="C:prefoldin complex"/>
    <property type="evidence" value="ECO:0007669"/>
    <property type="project" value="UniProtKB-UniRule"/>
</dbReference>
<dbReference type="GO" id="GO:0051082">
    <property type="term" value="F:unfolded protein binding"/>
    <property type="evidence" value="ECO:0007669"/>
    <property type="project" value="UniProtKB-UniRule"/>
</dbReference>
<dbReference type="GO" id="GO:0006457">
    <property type="term" value="P:protein folding"/>
    <property type="evidence" value="ECO:0007669"/>
    <property type="project" value="UniProtKB-UniRule"/>
</dbReference>
<dbReference type="CDD" id="cd23162">
    <property type="entry name" value="Prefoldin_beta_GimC"/>
    <property type="match status" value="1"/>
</dbReference>
<dbReference type="Gene3D" id="1.10.287.370">
    <property type="match status" value="1"/>
</dbReference>
<dbReference type="HAMAP" id="MF_00307">
    <property type="entry name" value="PfdB"/>
    <property type="match status" value="1"/>
</dbReference>
<dbReference type="InterPro" id="IPR002777">
    <property type="entry name" value="PFD_beta-like"/>
</dbReference>
<dbReference type="InterPro" id="IPR012713">
    <property type="entry name" value="PfdB"/>
</dbReference>
<dbReference type="InterPro" id="IPR009053">
    <property type="entry name" value="Prefoldin"/>
</dbReference>
<dbReference type="NCBIfam" id="TIGR02338">
    <property type="entry name" value="gimC_beta"/>
    <property type="match status" value="1"/>
</dbReference>
<dbReference type="Pfam" id="PF01920">
    <property type="entry name" value="Prefoldin_2"/>
    <property type="match status" value="1"/>
</dbReference>
<dbReference type="SUPFAM" id="SSF46579">
    <property type="entry name" value="Prefoldin"/>
    <property type="match status" value="1"/>
</dbReference>
<comment type="function">
    <text evidence="1">Molecular chaperone capable of stabilizing a range of proteins. Seems to fulfill an ATP-independent, HSP70-like function in archaeal de novo protein folding (By similarity).</text>
</comment>
<comment type="subunit">
    <text evidence="1">Heterohexamer of two alpha and four beta subunits.</text>
</comment>
<comment type="subcellular location">
    <subcellularLocation>
        <location evidence="1">Cytoplasm</location>
    </subcellularLocation>
</comment>
<comment type="similarity">
    <text evidence="2">Belongs to the prefoldin subunit beta family.</text>
</comment>
<proteinExistence type="inferred from homology"/>
<keyword id="KW-0143">Chaperone</keyword>
<keyword id="KW-0963">Cytoplasm</keyword>
<evidence type="ECO:0000250" key="1"/>
<evidence type="ECO:0000305" key="2"/>
<protein>
    <recommendedName>
        <fullName>Prefoldin subunit beta</fullName>
    </recommendedName>
    <alternativeName>
        <fullName>GimC subunit beta</fullName>
    </alternativeName>
</protein>
<gene>
    <name type="primary">pfdB</name>
    <name type="ordered locus">TV1237</name>
    <name type="ORF">TVG1278162</name>
</gene>
<accession>Q979C4</accession>
<organism>
    <name type="scientific">Thermoplasma volcanium (strain ATCC 51530 / DSM 4299 / JCM 9571 / NBRC 15438 / GSS1)</name>
    <dbReference type="NCBI Taxonomy" id="273116"/>
    <lineage>
        <taxon>Archaea</taxon>
        <taxon>Methanobacteriati</taxon>
        <taxon>Thermoplasmatota</taxon>
        <taxon>Thermoplasmata</taxon>
        <taxon>Thermoplasmatales</taxon>
        <taxon>Thermoplasmataceae</taxon>
        <taxon>Thermoplasma</taxon>
    </lineage>
</organism>